<proteinExistence type="inferred from homology"/>
<sequence>MARFPEAEERILNKKICMKCSARNAVRATRCRKCGYTNLRVKNKDVRRG</sequence>
<name>RL40_METBU</name>
<organism>
    <name type="scientific">Methanococcoides burtonii (strain DSM 6242 / NBRC 107633 / OCM 468 / ACE-M)</name>
    <dbReference type="NCBI Taxonomy" id="259564"/>
    <lineage>
        <taxon>Archaea</taxon>
        <taxon>Methanobacteriati</taxon>
        <taxon>Methanobacteriota</taxon>
        <taxon>Stenosarchaea group</taxon>
        <taxon>Methanomicrobia</taxon>
        <taxon>Methanosarcinales</taxon>
        <taxon>Methanosarcinaceae</taxon>
        <taxon>Methanococcoides</taxon>
    </lineage>
</organism>
<reference key="1">
    <citation type="journal article" date="2009" name="ISME J.">
        <title>The genome sequence of the psychrophilic archaeon, Methanococcoides burtonii: the role of genome evolution in cold adaptation.</title>
        <authorList>
            <person name="Allen M.A."/>
            <person name="Lauro F.M."/>
            <person name="Williams T.J."/>
            <person name="Burg D."/>
            <person name="Siddiqui K.S."/>
            <person name="De Francisci D."/>
            <person name="Chong K.W."/>
            <person name="Pilak O."/>
            <person name="Chew H.H."/>
            <person name="De Maere M.Z."/>
            <person name="Ting L."/>
            <person name="Katrib M."/>
            <person name="Ng C."/>
            <person name="Sowers K.R."/>
            <person name="Galperin M.Y."/>
            <person name="Anderson I.J."/>
            <person name="Ivanova N."/>
            <person name="Dalin E."/>
            <person name="Martinez M."/>
            <person name="Lapidus A."/>
            <person name="Hauser L."/>
            <person name="Land M."/>
            <person name="Thomas T."/>
            <person name="Cavicchioli R."/>
        </authorList>
    </citation>
    <scope>NUCLEOTIDE SEQUENCE [LARGE SCALE GENOMIC DNA]</scope>
    <source>
        <strain>DSM 6242 / NBRC 107633 / OCM 468 / ACE-M</strain>
    </source>
</reference>
<comment type="similarity">
    <text evidence="1">Belongs to the eukaryotic ribosomal protein eL40 family.</text>
</comment>
<gene>
    <name evidence="1" type="primary">rpl40e</name>
    <name type="ordered locus">Mbur_1653</name>
</gene>
<dbReference type="EMBL" id="CP000300">
    <property type="protein sequence ID" value="ABE52553.1"/>
    <property type="molecule type" value="Genomic_DNA"/>
</dbReference>
<dbReference type="RefSeq" id="WP_011499696.1">
    <property type="nucleotide sequence ID" value="NC_007955.1"/>
</dbReference>
<dbReference type="SMR" id="Q12VH3"/>
<dbReference type="STRING" id="259564.Mbur_1653"/>
<dbReference type="GeneID" id="3997286"/>
<dbReference type="KEGG" id="mbu:Mbur_1653"/>
<dbReference type="HOGENOM" id="CLU_205640_0_0_2"/>
<dbReference type="OrthoDB" id="45138at2157"/>
<dbReference type="Proteomes" id="UP000001979">
    <property type="component" value="Chromosome"/>
</dbReference>
<dbReference type="GO" id="GO:1990904">
    <property type="term" value="C:ribonucleoprotein complex"/>
    <property type="evidence" value="ECO:0007669"/>
    <property type="project" value="UniProtKB-KW"/>
</dbReference>
<dbReference type="GO" id="GO:0005840">
    <property type="term" value="C:ribosome"/>
    <property type="evidence" value="ECO:0007669"/>
    <property type="project" value="UniProtKB-KW"/>
</dbReference>
<dbReference type="GO" id="GO:0003735">
    <property type="term" value="F:structural constituent of ribosome"/>
    <property type="evidence" value="ECO:0007669"/>
    <property type="project" value="InterPro"/>
</dbReference>
<dbReference type="GO" id="GO:0006412">
    <property type="term" value="P:translation"/>
    <property type="evidence" value="ECO:0007669"/>
    <property type="project" value="UniProtKB-UniRule"/>
</dbReference>
<dbReference type="Gene3D" id="4.10.1060.50">
    <property type="match status" value="1"/>
</dbReference>
<dbReference type="HAMAP" id="MF_00788">
    <property type="entry name" value="Ribosomal_eL40"/>
    <property type="match status" value="1"/>
</dbReference>
<dbReference type="InterPro" id="IPR023657">
    <property type="entry name" value="Ribosomal_eL40_arc"/>
</dbReference>
<dbReference type="InterPro" id="IPR001975">
    <property type="entry name" value="Ribosomal_eL40_dom"/>
</dbReference>
<dbReference type="InterPro" id="IPR038587">
    <property type="entry name" value="Ribosomal_eL40_sf"/>
</dbReference>
<dbReference type="InterPro" id="IPR011332">
    <property type="entry name" value="Ribosomal_zn-bd"/>
</dbReference>
<dbReference type="NCBIfam" id="NF003161">
    <property type="entry name" value="PRK04136.1"/>
    <property type="match status" value="1"/>
</dbReference>
<dbReference type="PANTHER" id="PTHR39649">
    <property type="entry name" value="50S RIBOSOMAL PROTEIN L40E"/>
    <property type="match status" value="1"/>
</dbReference>
<dbReference type="PANTHER" id="PTHR39649:SF1">
    <property type="entry name" value="LARGE RIBOSOMAL SUBUNIT PROTEIN EL40"/>
    <property type="match status" value="1"/>
</dbReference>
<dbReference type="Pfam" id="PF01020">
    <property type="entry name" value="Ribosomal_L40e"/>
    <property type="match status" value="1"/>
</dbReference>
<dbReference type="SMART" id="SM01377">
    <property type="entry name" value="Ribosomal_L40e"/>
    <property type="match status" value="1"/>
</dbReference>
<dbReference type="SUPFAM" id="SSF57829">
    <property type="entry name" value="Zn-binding ribosomal proteins"/>
    <property type="match status" value="1"/>
</dbReference>
<protein>
    <recommendedName>
        <fullName evidence="1">Large ribosomal subunit protein eL40</fullName>
    </recommendedName>
    <alternativeName>
        <fullName evidence="2">50S ribosomal protein L40e</fullName>
    </alternativeName>
</protein>
<keyword id="KW-0687">Ribonucleoprotein</keyword>
<keyword id="KW-0689">Ribosomal protein</keyword>
<accession>Q12VH3</accession>
<evidence type="ECO:0000255" key="1">
    <source>
        <dbReference type="HAMAP-Rule" id="MF_00788"/>
    </source>
</evidence>
<evidence type="ECO:0000305" key="2"/>
<feature type="chain" id="PRO_1000046882" description="Large ribosomal subunit protein eL40">
    <location>
        <begin position="1"/>
        <end position="49"/>
    </location>
</feature>